<gene>
    <name type="primary">Ste12DOR</name>
    <name type="ORF">CG32616</name>
</gene>
<proteinExistence type="evidence at protein level"/>
<accession>Q9NIV2</accession>
<accession>Q8IR61</accession>
<dbReference type="EMBL" id="AF192309">
    <property type="protein sequence ID" value="AAF35172.1"/>
    <property type="molecule type" value="Genomic_DNA"/>
</dbReference>
<dbReference type="EMBL" id="AE014298">
    <property type="protein sequence ID" value="AAN09576.3"/>
    <property type="molecule type" value="Genomic_DNA"/>
</dbReference>
<dbReference type="PIR" id="S24398">
    <property type="entry name" value="S24398"/>
</dbReference>
<dbReference type="RefSeq" id="NP_727747.3">
    <property type="nucleotide sequence ID" value="NM_167390.3"/>
</dbReference>
<dbReference type="SMR" id="Q9NIV2"/>
<dbReference type="BioGRID" id="77722">
    <property type="interactions" value="2"/>
</dbReference>
<dbReference type="FunCoup" id="Q9NIV2">
    <property type="interactions" value="168"/>
</dbReference>
<dbReference type="IntAct" id="Q9NIV2">
    <property type="interactions" value="1"/>
</dbReference>
<dbReference type="STRING" id="7227.FBpp0298298"/>
<dbReference type="PaxDb" id="7227-FBpp0298298"/>
<dbReference type="EnsemblMetazoa" id="FBtr0307297">
    <property type="protein sequence ID" value="FBpp0298298"/>
    <property type="gene ID" value="FBgn0044817"/>
</dbReference>
<dbReference type="GeneID" id="117463"/>
<dbReference type="KEGG" id="dme:Dmel_CG32616"/>
<dbReference type="KEGG" id="dme:Dmel_CG33237"/>
<dbReference type="AGR" id="FB:FBgn0044817"/>
<dbReference type="CTD" id="117463"/>
<dbReference type="CTD" id="2768872"/>
<dbReference type="FlyBase" id="FBgn0044817">
    <property type="gene designation" value="Ste12DOR"/>
</dbReference>
<dbReference type="VEuPathDB" id="VectorBase:FBgn0044817"/>
<dbReference type="eggNOG" id="KOG3092">
    <property type="taxonomic scope" value="Eukaryota"/>
</dbReference>
<dbReference type="GeneTree" id="ENSGT00390000003781"/>
<dbReference type="HOGENOM" id="CLU_034027_3_3_1"/>
<dbReference type="InParanoid" id="Q9NIV2"/>
<dbReference type="OrthoDB" id="3971593at2759"/>
<dbReference type="PhylomeDB" id="Q9NIV2"/>
<dbReference type="BioGRID-ORCS" id="117463">
    <property type="hits" value="0 hits in 1 CRISPR screen"/>
</dbReference>
<dbReference type="PRO" id="PR:Q9NIV2"/>
<dbReference type="Proteomes" id="UP000000803">
    <property type="component" value="Chromosome X"/>
</dbReference>
<dbReference type="Bgee" id="FBgn0044817">
    <property type="expression patterns" value="Expressed in epithelial cell"/>
</dbReference>
<dbReference type="GO" id="GO:0005737">
    <property type="term" value="C:cytoplasm"/>
    <property type="evidence" value="ECO:0000318"/>
    <property type="project" value="GO_Central"/>
</dbReference>
<dbReference type="GO" id="GO:0005956">
    <property type="term" value="C:protein kinase CK2 complex"/>
    <property type="evidence" value="ECO:0000318"/>
    <property type="project" value="GO_Central"/>
</dbReference>
<dbReference type="GO" id="GO:0019887">
    <property type="term" value="F:protein kinase regulator activity"/>
    <property type="evidence" value="ECO:0000318"/>
    <property type="project" value="GO_Central"/>
</dbReference>
<dbReference type="FunFam" id="1.10.1820.10:FF:000005">
    <property type="entry name" value="Casein kinase II subunit beta"/>
    <property type="match status" value="1"/>
</dbReference>
<dbReference type="FunFam" id="2.20.25.20:FF:000001">
    <property type="entry name" value="Casein kinase II subunit beta"/>
    <property type="match status" value="1"/>
</dbReference>
<dbReference type="Gene3D" id="2.20.25.20">
    <property type="match status" value="1"/>
</dbReference>
<dbReference type="Gene3D" id="1.10.1820.10">
    <property type="entry name" value="protein kinase ck2 holoenzyme, chain C, domain 1"/>
    <property type="match status" value="1"/>
</dbReference>
<dbReference type="InterPro" id="IPR016149">
    <property type="entry name" value="Casein_kin_II_reg-sub_N"/>
</dbReference>
<dbReference type="InterPro" id="IPR035991">
    <property type="entry name" value="Casein_kinase_II_beta-like"/>
</dbReference>
<dbReference type="InterPro" id="IPR000704">
    <property type="entry name" value="Casein_kinase_II_reg-sub"/>
</dbReference>
<dbReference type="PANTHER" id="PTHR11740">
    <property type="entry name" value="CASEIN KINASE II SUBUNIT BETA"/>
    <property type="match status" value="1"/>
</dbReference>
<dbReference type="PANTHER" id="PTHR11740:SF0">
    <property type="entry name" value="CASEIN KINASE II SUBUNIT BETA"/>
    <property type="match status" value="1"/>
</dbReference>
<dbReference type="Pfam" id="PF01214">
    <property type="entry name" value="CK_II_beta"/>
    <property type="match status" value="1"/>
</dbReference>
<dbReference type="PRINTS" id="PR00472">
    <property type="entry name" value="CASNKINASEII"/>
</dbReference>
<dbReference type="SMART" id="SM01085">
    <property type="entry name" value="CK_II_beta"/>
    <property type="match status" value="1"/>
</dbReference>
<dbReference type="SUPFAM" id="SSF57798">
    <property type="entry name" value="Casein kinase II beta subunit"/>
    <property type="match status" value="1"/>
</dbReference>
<dbReference type="PROSITE" id="PS01101">
    <property type="entry name" value="CK2_BETA"/>
    <property type="match status" value="1"/>
</dbReference>
<reference key="1">
    <citation type="journal article" date="2000" name="Genetica">
        <title>Paralogous stellate and Su(Ste) repeats: evolution and ability to silence a reporter gene.</title>
        <authorList>
            <person name="Gvozdev V.A."/>
            <person name="Kogan G.L."/>
            <person name="Tulin A.A."/>
            <person name="Aravin A.A."/>
            <person name="Naumova N.M."/>
            <person name="Shevelyov Y.Y."/>
        </authorList>
    </citation>
    <scope>NUCLEOTIDE SEQUENCE [GENOMIC DNA]</scope>
</reference>
<reference key="2">
    <citation type="journal article" date="2000" name="Science">
        <title>The genome sequence of Drosophila melanogaster.</title>
        <authorList>
            <person name="Adams M.D."/>
            <person name="Celniker S.E."/>
            <person name="Holt R.A."/>
            <person name="Evans C.A."/>
            <person name="Gocayne J.D."/>
            <person name="Amanatides P.G."/>
            <person name="Scherer S.E."/>
            <person name="Li P.W."/>
            <person name="Hoskins R.A."/>
            <person name="Galle R.F."/>
            <person name="George R.A."/>
            <person name="Lewis S.E."/>
            <person name="Richards S."/>
            <person name="Ashburner M."/>
            <person name="Henderson S.N."/>
            <person name="Sutton G.G."/>
            <person name="Wortman J.R."/>
            <person name="Yandell M.D."/>
            <person name="Zhang Q."/>
            <person name="Chen L.X."/>
            <person name="Brandon R.C."/>
            <person name="Rogers Y.-H.C."/>
            <person name="Blazej R.G."/>
            <person name="Champe M."/>
            <person name="Pfeiffer B.D."/>
            <person name="Wan K.H."/>
            <person name="Doyle C."/>
            <person name="Baxter E.G."/>
            <person name="Helt G."/>
            <person name="Nelson C.R."/>
            <person name="Miklos G.L.G."/>
            <person name="Abril J.F."/>
            <person name="Agbayani A."/>
            <person name="An H.-J."/>
            <person name="Andrews-Pfannkoch C."/>
            <person name="Baldwin D."/>
            <person name="Ballew R.M."/>
            <person name="Basu A."/>
            <person name="Baxendale J."/>
            <person name="Bayraktaroglu L."/>
            <person name="Beasley E.M."/>
            <person name="Beeson K.Y."/>
            <person name="Benos P.V."/>
            <person name="Berman B.P."/>
            <person name="Bhandari D."/>
            <person name="Bolshakov S."/>
            <person name="Borkova D."/>
            <person name="Botchan M.R."/>
            <person name="Bouck J."/>
            <person name="Brokstein P."/>
            <person name="Brottier P."/>
            <person name="Burtis K.C."/>
            <person name="Busam D.A."/>
            <person name="Butler H."/>
            <person name="Cadieu E."/>
            <person name="Center A."/>
            <person name="Chandra I."/>
            <person name="Cherry J.M."/>
            <person name="Cawley S."/>
            <person name="Dahlke C."/>
            <person name="Davenport L.B."/>
            <person name="Davies P."/>
            <person name="de Pablos B."/>
            <person name="Delcher A."/>
            <person name="Deng Z."/>
            <person name="Mays A.D."/>
            <person name="Dew I."/>
            <person name="Dietz S.M."/>
            <person name="Dodson K."/>
            <person name="Doup L.E."/>
            <person name="Downes M."/>
            <person name="Dugan-Rocha S."/>
            <person name="Dunkov B.C."/>
            <person name="Dunn P."/>
            <person name="Durbin K.J."/>
            <person name="Evangelista C.C."/>
            <person name="Ferraz C."/>
            <person name="Ferriera S."/>
            <person name="Fleischmann W."/>
            <person name="Fosler C."/>
            <person name="Gabrielian A.E."/>
            <person name="Garg N.S."/>
            <person name="Gelbart W.M."/>
            <person name="Glasser K."/>
            <person name="Glodek A."/>
            <person name="Gong F."/>
            <person name="Gorrell J.H."/>
            <person name="Gu Z."/>
            <person name="Guan P."/>
            <person name="Harris M."/>
            <person name="Harris N.L."/>
            <person name="Harvey D.A."/>
            <person name="Heiman T.J."/>
            <person name="Hernandez J.R."/>
            <person name="Houck J."/>
            <person name="Hostin D."/>
            <person name="Houston K.A."/>
            <person name="Howland T.J."/>
            <person name="Wei M.-H."/>
            <person name="Ibegwam C."/>
            <person name="Jalali M."/>
            <person name="Kalush F."/>
            <person name="Karpen G.H."/>
            <person name="Ke Z."/>
            <person name="Kennison J.A."/>
            <person name="Ketchum K.A."/>
            <person name="Kimmel B.E."/>
            <person name="Kodira C.D."/>
            <person name="Kraft C.L."/>
            <person name="Kravitz S."/>
            <person name="Kulp D."/>
            <person name="Lai Z."/>
            <person name="Lasko P."/>
            <person name="Lei Y."/>
            <person name="Levitsky A.A."/>
            <person name="Li J.H."/>
            <person name="Li Z."/>
            <person name="Liang Y."/>
            <person name="Lin X."/>
            <person name="Liu X."/>
            <person name="Mattei B."/>
            <person name="McIntosh T.C."/>
            <person name="McLeod M.P."/>
            <person name="McPherson D."/>
            <person name="Merkulov G."/>
            <person name="Milshina N.V."/>
            <person name="Mobarry C."/>
            <person name="Morris J."/>
            <person name="Moshrefi A."/>
            <person name="Mount S.M."/>
            <person name="Moy M."/>
            <person name="Murphy B."/>
            <person name="Murphy L."/>
            <person name="Muzny D.M."/>
            <person name="Nelson D.L."/>
            <person name="Nelson D.R."/>
            <person name="Nelson K.A."/>
            <person name="Nixon K."/>
            <person name="Nusskern D.R."/>
            <person name="Pacleb J.M."/>
            <person name="Palazzolo M."/>
            <person name="Pittman G.S."/>
            <person name="Pan S."/>
            <person name="Pollard J."/>
            <person name="Puri V."/>
            <person name="Reese M.G."/>
            <person name="Reinert K."/>
            <person name="Remington K."/>
            <person name="Saunders R.D.C."/>
            <person name="Scheeler F."/>
            <person name="Shen H."/>
            <person name="Shue B.C."/>
            <person name="Siden-Kiamos I."/>
            <person name="Simpson M."/>
            <person name="Skupski M.P."/>
            <person name="Smith T.J."/>
            <person name="Spier E."/>
            <person name="Spradling A.C."/>
            <person name="Stapleton M."/>
            <person name="Strong R."/>
            <person name="Sun E."/>
            <person name="Svirskas R."/>
            <person name="Tector C."/>
            <person name="Turner R."/>
            <person name="Venter E."/>
            <person name="Wang A.H."/>
            <person name="Wang X."/>
            <person name="Wang Z.-Y."/>
            <person name="Wassarman D.A."/>
            <person name="Weinstock G.M."/>
            <person name="Weissenbach J."/>
            <person name="Williams S.M."/>
            <person name="Woodage T."/>
            <person name="Worley K.C."/>
            <person name="Wu D."/>
            <person name="Yang S."/>
            <person name="Yao Q.A."/>
            <person name="Ye J."/>
            <person name="Yeh R.-F."/>
            <person name="Zaveri J.S."/>
            <person name="Zhan M."/>
            <person name="Zhang G."/>
            <person name="Zhao Q."/>
            <person name="Zheng L."/>
            <person name="Zheng X.H."/>
            <person name="Zhong F.N."/>
            <person name="Zhong W."/>
            <person name="Zhou X."/>
            <person name="Zhu S.C."/>
            <person name="Zhu X."/>
            <person name="Smith H.O."/>
            <person name="Gibbs R.A."/>
            <person name="Myers E.W."/>
            <person name="Rubin G.M."/>
            <person name="Venter J.C."/>
        </authorList>
    </citation>
    <scope>NUCLEOTIDE SEQUENCE [LARGE SCALE GENOMIC DNA]</scope>
    <source>
        <strain>Berkeley</strain>
    </source>
</reference>
<reference key="3">
    <citation type="journal article" date="2002" name="Genome Biol.">
        <title>Annotation of the Drosophila melanogaster euchromatic genome: a systematic review.</title>
        <authorList>
            <person name="Misra S."/>
            <person name="Crosby M.A."/>
            <person name="Mungall C.J."/>
            <person name="Matthews B.B."/>
            <person name="Campbell K.S."/>
            <person name="Hradecky P."/>
            <person name="Huang Y."/>
            <person name="Kaminker J.S."/>
            <person name="Millburn G.H."/>
            <person name="Prochnik S.E."/>
            <person name="Smith C.D."/>
            <person name="Tupy J.L."/>
            <person name="Whitfield E.J."/>
            <person name="Bayraktaroglu L."/>
            <person name="Berman B.P."/>
            <person name="Bettencourt B.R."/>
            <person name="Celniker S.E."/>
            <person name="de Grey A.D.N.J."/>
            <person name="Drysdale R.A."/>
            <person name="Harris N.L."/>
            <person name="Richter J."/>
            <person name="Russo S."/>
            <person name="Schroeder A.J."/>
            <person name="Shu S.Q."/>
            <person name="Stapleton M."/>
            <person name="Yamada C."/>
            <person name="Ashburner M."/>
            <person name="Gelbart W.M."/>
            <person name="Rubin G.M."/>
            <person name="Lewis S.E."/>
        </authorList>
    </citation>
    <scope>GENOME REANNOTATION</scope>
    <source>
        <strain>Berkeley</strain>
    </source>
</reference>
<reference key="4">
    <citation type="journal article" date="1995" name="Proc. Natl. Acad. Sci. U.S.A.">
        <title>The Ste locus, a component of the parasitic cry-Ste system of Drosophila melanogaster, encodes a protein that forms crystals in primary spermatocytes and mimics properties of the beta subunit of casein kinase 2.</title>
        <authorList>
            <person name="Bozzetti M.P."/>
            <person name="Massari S."/>
            <person name="Finelli P."/>
            <person name="Meggio F."/>
            <person name="Pinna L.A."/>
            <person name="Boldyreff B."/>
            <person name="Issinger O.G."/>
            <person name="Palumbo G."/>
            <person name="Ciriaco C."/>
            <person name="Bonaccorsi S."/>
            <person name="Pimpinelli S."/>
        </authorList>
    </citation>
    <scope>TISSUE SPECIFICITY</scope>
    <scope>INTERACTION WITH CKII-ALPHA</scope>
</reference>
<reference key="5">
    <citation type="journal article" date="2001" name="Chromosoma">
        <title>A role of the Drosophila homeless gene in repression of Stellate in male meiosis.</title>
        <authorList>
            <person name="Stapleton W."/>
            <person name="Das S."/>
            <person name="McKee B.D."/>
        </authorList>
    </citation>
    <scope>INDUCTION</scope>
</reference>
<reference key="6">
    <citation type="journal article" date="2001" name="Curr. Biol.">
        <title>Double-stranded RNA-mediated silencing of genomic tandem repeats and transposable elements in the D. melanogaster germline.</title>
        <authorList>
            <person name="Aravin A.A."/>
            <person name="Naumova N.M."/>
            <person name="Tulin A.V."/>
            <person name="Vagin V.V."/>
            <person name="Rozovsky Y.M."/>
            <person name="Gvozdev V.A."/>
        </authorList>
    </citation>
    <scope>INDUCTION</scope>
</reference>
<organism>
    <name type="scientific">Drosophila melanogaster</name>
    <name type="common">Fruit fly</name>
    <dbReference type="NCBI Taxonomy" id="7227"/>
    <lineage>
        <taxon>Eukaryota</taxon>
        <taxon>Metazoa</taxon>
        <taxon>Ecdysozoa</taxon>
        <taxon>Arthropoda</taxon>
        <taxon>Hexapoda</taxon>
        <taxon>Insecta</taxon>
        <taxon>Pterygota</taxon>
        <taxon>Neoptera</taxon>
        <taxon>Endopterygota</taxon>
        <taxon>Diptera</taxon>
        <taxon>Brachycera</taxon>
        <taxon>Muscomorpha</taxon>
        <taxon>Ephydroidea</taxon>
        <taxon>Drosophilidae</taxon>
        <taxon>Drosophila</taxon>
        <taxon>Sophophora</taxon>
    </lineage>
</organism>
<keyword id="KW-1185">Reference proteome</keyword>
<comment type="function">
    <text>Unknown. In males lacking the Y chromosome, its strong overexpression leads to the appearance of proteinaceous star-shaped crystals in the primary spermatocytes causing meiotic drive, possibly by interfering with normal casein kinase 2 activity.</text>
</comment>
<comment type="subunit">
    <text evidence="3">Interacts in vitro with the casein kinase 2 alpha subunit (CkII-alpha). The relevance of such interaction is however unclear in vivo.</text>
</comment>
<comment type="tissue specificity">
    <text evidence="3">Probably not expressed in wild-type flies. In males lacking the Y chromosome, it is testis-specific and constitutes the main component of star-shaped crystals.</text>
</comment>
<comment type="induction">
    <text evidence="1 2">In wild-type flies, it is strongly down-regulated by double-stranded RNA (dsRNA) interference mediated by Su(Ste) transcripts. In males lacking the Y chromosome, the absence of Su(Ste) locus, relieves such down-regulation, explaining why it is strongly expressed.</text>
</comment>
<comment type="miscellaneous">
    <text>There are multiple copies of the stellate gene in fruit fly, encoding proteins that are extremely similar, which makes their individual characterization difficult. Thus, most experiments probably do not discriminate between the different members.</text>
</comment>
<comment type="similarity">
    <text evidence="4">Belongs to the casein kinase 2 subunit beta family.</text>
</comment>
<sequence>MSSSQNNNSSWIDWFLGIKGNQFLCRVPTDYVQDTFNQMGLEYFSEILDVILKPVIDSSSGLLYGDEKKWYGMIHARYIRSERGLIAMHRKYMRGDFGSCPNISCDRQNTLPVGVSAVWGKSTVKIHCPRCKSNFHPKSDTQLDGAMFGPSFPDIFFSMLPNLTSPLDDPRT</sequence>
<feature type="chain" id="PRO_0000068268" description="Stellate orphon protein at 12D">
    <location>
        <begin position="1"/>
        <end position="172"/>
    </location>
</feature>
<feature type="sequence conflict" description="In Ref. 1; AAF35172." evidence="4" ref="1">
    <original>V</original>
    <variation>L</variation>
    <location>
        <position position="115"/>
    </location>
</feature>
<feature type="sequence conflict" description="In Ref. 1; AAF35172." evidence="4" ref="1">
    <original>M</original>
    <variation>L</variation>
    <location>
        <position position="159"/>
    </location>
</feature>
<protein>
    <recommendedName>
        <fullName>Stellate orphon protein at 12D</fullName>
    </recommendedName>
</protein>
<evidence type="ECO:0000269" key="1">
    <source>
    </source>
</evidence>
<evidence type="ECO:0000269" key="2">
    <source>
    </source>
</evidence>
<evidence type="ECO:0000269" key="3">
    <source>
    </source>
</evidence>
<evidence type="ECO:0000305" key="4"/>
<name>STEL8_DROME</name>